<gene>
    <name type="primary">PRA1C</name>
    <name type="ordered locus">At4g29658</name>
    <name type="ORF">T16L4.170</name>
</gene>
<proteinExistence type="evidence at transcript level"/>
<accession>Q1G3K7</accession>
<accession>Q9SU85</accession>
<protein>
    <recommendedName>
        <fullName>PRA1 family protein C</fullName>
        <shortName>AtPRA1.C</shortName>
    </recommendedName>
</protein>
<sequence length="127" mass="14210">MIFRTNYIVIFIVSIFISMLWQPVHLSVFVILIVAWLYVYSRDNEPWVIFGSVIDDSTLVLVLLVLTIGIFLLTDVSRGIVIGVLAGLPVVLVHGMCRRNTEMLFVLEDDEEKVAMNTSSSSLSSSS</sequence>
<name>PRA1C_ARATH</name>
<reference key="1">
    <citation type="journal article" date="1999" name="Nature">
        <title>Sequence and analysis of chromosome 4 of the plant Arabidopsis thaliana.</title>
        <authorList>
            <person name="Mayer K.F.X."/>
            <person name="Schueller C."/>
            <person name="Wambutt R."/>
            <person name="Murphy G."/>
            <person name="Volckaert G."/>
            <person name="Pohl T."/>
            <person name="Duesterhoeft A."/>
            <person name="Stiekema W."/>
            <person name="Entian K.-D."/>
            <person name="Terryn N."/>
            <person name="Harris B."/>
            <person name="Ansorge W."/>
            <person name="Brandt P."/>
            <person name="Grivell L.A."/>
            <person name="Rieger M."/>
            <person name="Weichselgartner M."/>
            <person name="de Simone V."/>
            <person name="Obermaier B."/>
            <person name="Mache R."/>
            <person name="Mueller M."/>
            <person name="Kreis M."/>
            <person name="Delseny M."/>
            <person name="Puigdomenech P."/>
            <person name="Watson M."/>
            <person name="Schmidtheini T."/>
            <person name="Reichert B."/>
            <person name="Portetelle D."/>
            <person name="Perez-Alonso M."/>
            <person name="Boutry M."/>
            <person name="Bancroft I."/>
            <person name="Vos P."/>
            <person name="Hoheisel J."/>
            <person name="Zimmermann W."/>
            <person name="Wedler H."/>
            <person name="Ridley P."/>
            <person name="Langham S.-A."/>
            <person name="McCullagh B."/>
            <person name="Bilham L."/>
            <person name="Robben J."/>
            <person name="van der Schueren J."/>
            <person name="Grymonprez B."/>
            <person name="Chuang Y.-J."/>
            <person name="Vandenbussche F."/>
            <person name="Braeken M."/>
            <person name="Weltjens I."/>
            <person name="Voet M."/>
            <person name="Bastiaens I."/>
            <person name="Aert R."/>
            <person name="Defoor E."/>
            <person name="Weitzenegger T."/>
            <person name="Bothe G."/>
            <person name="Ramsperger U."/>
            <person name="Hilbert H."/>
            <person name="Braun M."/>
            <person name="Holzer E."/>
            <person name="Brandt A."/>
            <person name="Peters S."/>
            <person name="van Staveren M."/>
            <person name="Dirkse W."/>
            <person name="Mooijman P."/>
            <person name="Klein Lankhorst R."/>
            <person name="Rose M."/>
            <person name="Hauf J."/>
            <person name="Koetter P."/>
            <person name="Berneiser S."/>
            <person name="Hempel S."/>
            <person name="Feldpausch M."/>
            <person name="Lamberth S."/>
            <person name="Van den Daele H."/>
            <person name="De Keyser A."/>
            <person name="Buysshaert C."/>
            <person name="Gielen J."/>
            <person name="Villarroel R."/>
            <person name="De Clercq R."/>
            <person name="van Montagu M."/>
            <person name="Rogers J."/>
            <person name="Cronin A."/>
            <person name="Quail M.A."/>
            <person name="Bray-Allen S."/>
            <person name="Clark L."/>
            <person name="Doggett J."/>
            <person name="Hall S."/>
            <person name="Kay M."/>
            <person name="Lennard N."/>
            <person name="McLay K."/>
            <person name="Mayes R."/>
            <person name="Pettett A."/>
            <person name="Rajandream M.A."/>
            <person name="Lyne M."/>
            <person name="Benes V."/>
            <person name="Rechmann S."/>
            <person name="Borkova D."/>
            <person name="Bloecker H."/>
            <person name="Scharfe M."/>
            <person name="Grimm M."/>
            <person name="Loehnert T.-H."/>
            <person name="Dose S."/>
            <person name="de Haan M."/>
            <person name="Maarse A.C."/>
            <person name="Schaefer M."/>
            <person name="Mueller-Auer S."/>
            <person name="Gabel C."/>
            <person name="Fuchs M."/>
            <person name="Fartmann B."/>
            <person name="Granderath K."/>
            <person name="Dauner D."/>
            <person name="Herzl A."/>
            <person name="Neumann S."/>
            <person name="Argiriou A."/>
            <person name="Vitale D."/>
            <person name="Liguori R."/>
            <person name="Piravandi E."/>
            <person name="Massenet O."/>
            <person name="Quigley F."/>
            <person name="Clabauld G."/>
            <person name="Muendlein A."/>
            <person name="Felber R."/>
            <person name="Schnabl S."/>
            <person name="Hiller R."/>
            <person name="Schmidt W."/>
            <person name="Lecharny A."/>
            <person name="Aubourg S."/>
            <person name="Chefdor F."/>
            <person name="Cooke R."/>
            <person name="Berger C."/>
            <person name="Monfort A."/>
            <person name="Casacuberta E."/>
            <person name="Gibbons T."/>
            <person name="Weber N."/>
            <person name="Vandenbol M."/>
            <person name="Bargues M."/>
            <person name="Terol J."/>
            <person name="Torres A."/>
            <person name="Perez-Perez A."/>
            <person name="Purnelle B."/>
            <person name="Bent E."/>
            <person name="Johnson S."/>
            <person name="Tacon D."/>
            <person name="Jesse T."/>
            <person name="Heijnen L."/>
            <person name="Schwarz S."/>
            <person name="Scholler P."/>
            <person name="Heber S."/>
            <person name="Francs P."/>
            <person name="Bielke C."/>
            <person name="Frishman D."/>
            <person name="Haase D."/>
            <person name="Lemcke K."/>
            <person name="Mewes H.-W."/>
            <person name="Stocker S."/>
            <person name="Zaccaria P."/>
            <person name="Bevan M."/>
            <person name="Wilson R.K."/>
            <person name="de la Bastide M."/>
            <person name="Habermann K."/>
            <person name="Parnell L."/>
            <person name="Dedhia N."/>
            <person name="Gnoj L."/>
            <person name="Schutz K."/>
            <person name="Huang E."/>
            <person name="Spiegel L."/>
            <person name="Sekhon M."/>
            <person name="Murray J."/>
            <person name="Sheet P."/>
            <person name="Cordes M."/>
            <person name="Abu-Threideh J."/>
            <person name="Stoneking T."/>
            <person name="Kalicki J."/>
            <person name="Graves T."/>
            <person name="Harmon G."/>
            <person name="Edwards J."/>
            <person name="Latreille P."/>
            <person name="Courtney L."/>
            <person name="Cloud J."/>
            <person name="Abbott A."/>
            <person name="Scott K."/>
            <person name="Johnson D."/>
            <person name="Minx P."/>
            <person name="Bentley D."/>
            <person name="Fulton B."/>
            <person name="Miller N."/>
            <person name="Greco T."/>
            <person name="Kemp K."/>
            <person name="Kramer J."/>
            <person name="Fulton L."/>
            <person name="Mardis E."/>
            <person name="Dante M."/>
            <person name="Pepin K."/>
            <person name="Hillier L.W."/>
            <person name="Nelson J."/>
            <person name="Spieth J."/>
            <person name="Ryan E."/>
            <person name="Andrews S."/>
            <person name="Geisel C."/>
            <person name="Layman D."/>
            <person name="Du H."/>
            <person name="Ali J."/>
            <person name="Berghoff A."/>
            <person name="Jones K."/>
            <person name="Drone K."/>
            <person name="Cotton M."/>
            <person name="Joshu C."/>
            <person name="Antonoiu B."/>
            <person name="Zidanic M."/>
            <person name="Strong C."/>
            <person name="Sun H."/>
            <person name="Lamar B."/>
            <person name="Yordan C."/>
            <person name="Ma P."/>
            <person name="Zhong J."/>
            <person name="Preston R."/>
            <person name="Vil D."/>
            <person name="Shekher M."/>
            <person name="Matero A."/>
            <person name="Shah R."/>
            <person name="Swaby I.K."/>
            <person name="O'Shaughnessy A."/>
            <person name="Rodriguez M."/>
            <person name="Hoffman J."/>
            <person name="Till S."/>
            <person name="Granat S."/>
            <person name="Shohdy N."/>
            <person name="Hasegawa A."/>
            <person name="Hameed A."/>
            <person name="Lodhi M."/>
            <person name="Johnson A."/>
            <person name="Chen E."/>
            <person name="Marra M.A."/>
            <person name="Martienssen R."/>
            <person name="McCombie W.R."/>
        </authorList>
    </citation>
    <scope>NUCLEOTIDE SEQUENCE [LARGE SCALE GENOMIC DNA]</scope>
    <source>
        <strain>cv. Columbia</strain>
    </source>
</reference>
<reference key="2">
    <citation type="journal article" date="2017" name="Plant J.">
        <title>Araport11: a complete reannotation of the Arabidopsis thaliana reference genome.</title>
        <authorList>
            <person name="Cheng C.Y."/>
            <person name="Krishnakumar V."/>
            <person name="Chan A.P."/>
            <person name="Thibaud-Nissen F."/>
            <person name="Schobel S."/>
            <person name="Town C.D."/>
        </authorList>
    </citation>
    <scope>GENOME REANNOTATION</scope>
    <source>
        <strain>cv. Columbia</strain>
    </source>
</reference>
<reference key="3">
    <citation type="journal article" date="2006" name="Plant Biotechnol. J.">
        <title>Simultaneous high-throughput recombinational cloning of open reading frames in closed and open configurations.</title>
        <authorList>
            <person name="Underwood B.A."/>
            <person name="Vanderhaeghen R."/>
            <person name="Whitford R."/>
            <person name="Town C.D."/>
            <person name="Hilson P."/>
        </authorList>
    </citation>
    <scope>NUCLEOTIDE SEQUENCE [LARGE SCALE GENOMIC DNA]</scope>
    <source>
        <strain>cv. Columbia</strain>
    </source>
</reference>
<reference key="4">
    <citation type="journal article" date="2007" name="BMC Genomics">
        <title>Experimental validation of novel genes predicted in the un-annotated regions of the Arabidopsis genome.</title>
        <authorList>
            <person name="Moskal W.A. Jr."/>
            <person name="Wu H.C."/>
            <person name="Underwood B.A."/>
            <person name="Wang W."/>
            <person name="Town C.D."/>
            <person name="Xiao Y.-L."/>
        </authorList>
    </citation>
    <scope>NUCLEOTIDE SEQUENCE [LARGE SCALE MRNA]</scope>
    <source>
        <strain>cv. Columbia</strain>
    </source>
</reference>
<reference key="5">
    <citation type="journal article" date="2008" name="Plant Physiol.">
        <title>The PRA1 gene family in Arabidopsis.</title>
        <authorList>
            <person name="Alvim Kamei C.L."/>
            <person name="Boruc J."/>
            <person name="Vandepoele K."/>
            <person name="Van den Daele H."/>
            <person name="Maes S."/>
            <person name="Russinova E."/>
            <person name="Inze D."/>
            <person name="de Veylder L."/>
        </authorList>
    </citation>
    <scope>SUBCELLULAR LOCATION</scope>
    <scope>GENE FAMILY</scope>
    <scope>NOMENCLATURE</scope>
</reference>
<feature type="chain" id="PRO_0000352256" description="PRA1 family protein C">
    <location>
        <begin position="1"/>
        <end position="127"/>
    </location>
</feature>
<feature type="transmembrane region" description="Helical" evidence="2">
    <location>
        <begin position="15"/>
        <end position="35"/>
    </location>
</feature>
<feature type="transmembrane region" description="Helical" evidence="2">
    <location>
        <begin position="53"/>
        <end position="73"/>
    </location>
</feature>
<feature type="transmembrane region" description="Helical" evidence="2">
    <location>
        <begin position="76"/>
        <end position="96"/>
    </location>
</feature>
<evidence type="ECO:0000250" key="1"/>
<evidence type="ECO:0000255" key="2"/>
<evidence type="ECO:0000269" key="3">
    <source>
    </source>
</evidence>
<evidence type="ECO:0000305" key="4"/>
<dbReference type="EMBL" id="AL079344">
    <property type="protein sequence ID" value="CAB45326.1"/>
    <property type="status" value="ALT_SEQ"/>
    <property type="molecule type" value="Genomic_DNA"/>
</dbReference>
<dbReference type="EMBL" id="AL161575">
    <property type="protein sequence ID" value="CAB79724.1"/>
    <property type="status" value="ALT_SEQ"/>
    <property type="molecule type" value="Genomic_DNA"/>
</dbReference>
<dbReference type="EMBL" id="CP002687">
    <property type="protein sequence ID" value="AEE85657.1"/>
    <property type="molecule type" value="Genomic_DNA"/>
</dbReference>
<dbReference type="EMBL" id="DQ487577">
    <property type="protein sequence ID" value="ABF59372.1"/>
    <property type="molecule type" value="Genomic_DNA"/>
</dbReference>
<dbReference type="EMBL" id="EF182903">
    <property type="status" value="NOT_ANNOTATED_CDS"/>
    <property type="molecule type" value="mRNA"/>
</dbReference>
<dbReference type="PIR" id="T09929">
    <property type="entry name" value="T09929"/>
</dbReference>
<dbReference type="SMR" id="Q1G3K7"/>
<dbReference type="BioGRID" id="530918">
    <property type="interactions" value="9"/>
</dbReference>
<dbReference type="FunCoup" id="Q1G3K7">
    <property type="interactions" value="50"/>
</dbReference>
<dbReference type="IntAct" id="Q1G3K7">
    <property type="interactions" value="9"/>
</dbReference>
<dbReference type="STRING" id="3702.Q1G3K7"/>
<dbReference type="PaxDb" id="3702-AT4G29658.1"/>
<dbReference type="EnsemblPlants" id="AT4G29658.1">
    <property type="protein sequence ID" value="AT4G29658.1"/>
    <property type="gene ID" value="AT4G29658"/>
</dbReference>
<dbReference type="Gramene" id="AT4G29658.1">
    <property type="protein sequence ID" value="AT4G29658.1"/>
    <property type="gene ID" value="AT4G29658"/>
</dbReference>
<dbReference type="KEGG" id="ath:AT4G29658"/>
<dbReference type="Araport" id="AT4G29658"/>
<dbReference type="TAIR" id="AT4G29658">
    <property type="gene designation" value="PRA1.C"/>
</dbReference>
<dbReference type="eggNOG" id="KOG3142">
    <property type="taxonomic scope" value="Eukaryota"/>
</dbReference>
<dbReference type="HOGENOM" id="CLU_1973557_0_0_1"/>
<dbReference type="InParanoid" id="Q1G3K7"/>
<dbReference type="OrthoDB" id="63113at2759"/>
<dbReference type="PhylomeDB" id="Q1G3K7"/>
<dbReference type="PRO" id="PR:Q1G3K7"/>
<dbReference type="Proteomes" id="UP000006548">
    <property type="component" value="Chromosome 4"/>
</dbReference>
<dbReference type="ExpressionAtlas" id="Q1G3K7">
    <property type="expression patterns" value="baseline and differential"/>
</dbReference>
<dbReference type="GO" id="GO:0005783">
    <property type="term" value="C:endoplasmic reticulum"/>
    <property type="evidence" value="ECO:0000314"/>
    <property type="project" value="TAIR"/>
</dbReference>
<dbReference type="GO" id="GO:0005789">
    <property type="term" value="C:endoplasmic reticulum membrane"/>
    <property type="evidence" value="ECO:0007669"/>
    <property type="project" value="UniProtKB-SubCell"/>
</dbReference>
<dbReference type="GO" id="GO:0016192">
    <property type="term" value="P:vesicle-mediated transport"/>
    <property type="evidence" value="ECO:0000314"/>
    <property type="project" value="TAIR"/>
</dbReference>
<dbReference type="InterPro" id="IPR004895">
    <property type="entry name" value="Prenylated_rab_accept_PRA1"/>
</dbReference>
<dbReference type="PANTHER" id="PTHR19317:SF76">
    <property type="entry name" value="PRA1 FAMILY PROTEIN C"/>
    <property type="match status" value="1"/>
</dbReference>
<dbReference type="PANTHER" id="PTHR19317">
    <property type="entry name" value="PRENYLATED RAB ACCEPTOR 1-RELATED"/>
    <property type="match status" value="1"/>
</dbReference>
<dbReference type="Pfam" id="PF03208">
    <property type="entry name" value="PRA1"/>
    <property type="match status" value="1"/>
</dbReference>
<keyword id="KW-0256">Endoplasmic reticulum</keyword>
<keyword id="KW-0472">Membrane</keyword>
<keyword id="KW-1185">Reference proteome</keyword>
<keyword id="KW-0812">Transmembrane</keyword>
<keyword id="KW-1133">Transmembrane helix</keyword>
<keyword id="KW-0813">Transport</keyword>
<organism>
    <name type="scientific">Arabidopsis thaliana</name>
    <name type="common">Mouse-ear cress</name>
    <dbReference type="NCBI Taxonomy" id="3702"/>
    <lineage>
        <taxon>Eukaryota</taxon>
        <taxon>Viridiplantae</taxon>
        <taxon>Streptophyta</taxon>
        <taxon>Embryophyta</taxon>
        <taxon>Tracheophyta</taxon>
        <taxon>Spermatophyta</taxon>
        <taxon>Magnoliopsida</taxon>
        <taxon>eudicotyledons</taxon>
        <taxon>Gunneridae</taxon>
        <taxon>Pentapetalae</taxon>
        <taxon>rosids</taxon>
        <taxon>malvids</taxon>
        <taxon>Brassicales</taxon>
        <taxon>Brassicaceae</taxon>
        <taxon>Camelineae</taxon>
        <taxon>Arabidopsis</taxon>
    </lineage>
</organism>
<comment type="function">
    <text evidence="1">May be involved in both secretory and endocytic intracellular trafficking in the endosomal/prevacuolar compartments.</text>
</comment>
<comment type="subcellular location">
    <subcellularLocation>
        <location evidence="3">Endoplasmic reticulum membrane</location>
        <topology evidence="3">Multi-pass membrane protein</topology>
    </subcellularLocation>
</comment>
<comment type="similarity">
    <text evidence="4">Belongs to the PRA1 family.</text>
</comment>
<comment type="sequence caution" evidence="4">
    <conflict type="erroneous gene model prediction">
        <sequence resource="EMBL-CDS" id="CAB45326"/>
    </conflict>
    <text>The predicted gene At4g29660 has been split into 2 genes: At4g29658 and At4g29660.</text>
</comment>
<comment type="sequence caution" evidence="4">
    <conflict type="erroneous gene model prediction">
        <sequence resource="EMBL-CDS" id="CAB79724"/>
    </conflict>
    <text>The predicted gene At4g29660 has been split into 2 genes: At4g29658 and At4g29660.</text>
</comment>